<proteinExistence type="inferred from homology"/>
<organism>
    <name type="scientific">Salmonella choleraesuis (strain SC-B67)</name>
    <dbReference type="NCBI Taxonomy" id="321314"/>
    <lineage>
        <taxon>Bacteria</taxon>
        <taxon>Pseudomonadati</taxon>
        <taxon>Pseudomonadota</taxon>
        <taxon>Gammaproteobacteria</taxon>
        <taxon>Enterobacterales</taxon>
        <taxon>Enterobacteriaceae</taxon>
        <taxon>Salmonella</taxon>
    </lineage>
</organism>
<sequence length="246" mass="27571">MTNNAAAPLYSLRGLPLIGWRDMSHALNYLFADGQLKQGTLVAINAEKLLTAEDNPEVRALIAAAEFKYADGISVVRSIRKKFPQAQVSRVAGADLWEALMARAGKEGTPVFLVGGKPEVLAQTEAKLRTQWNVNIVGSQDGYFTPEQRQALFARIHASGAKIVTVAMGSPKQELLMRDCREVHPHALYMGVGGTYDVFTGHVKRAPKIWQNLGLEWLYRLLSQPKRITRQMRLLRYLRWHYTGDL</sequence>
<protein>
    <recommendedName>
        <fullName evidence="1">UDP-N-acetyl-D-mannosaminuronic acid transferase</fullName>
        <shortName evidence="1">UDP-ManNAcA transferase</shortName>
        <ecNumber evidence="1">2.4.1.180</ecNumber>
    </recommendedName>
</protein>
<keyword id="KW-0328">Glycosyltransferase</keyword>
<keyword id="KW-0808">Transferase</keyword>
<gene>
    <name evidence="1" type="primary">wecG</name>
    <name evidence="1" type="synonym">rffM</name>
    <name type="ordered locus">SCH_3834</name>
</gene>
<reference key="1">
    <citation type="journal article" date="2005" name="Nucleic Acids Res.">
        <title>The genome sequence of Salmonella enterica serovar Choleraesuis, a highly invasive and resistant zoonotic pathogen.</title>
        <authorList>
            <person name="Chiu C.-H."/>
            <person name="Tang P."/>
            <person name="Chu C."/>
            <person name="Hu S."/>
            <person name="Bao Q."/>
            <person name="Yu J."/>
            <person name="Chou Y.-Y."/>
            <person name="Wang H.-S."/>
            <person name="Lee Y.-S."/>
        </authorList>
    </citation>
    <scope>NUCLEOTIDE SEQUENCE [LARGE SCALE GENOMIC DNA]</scope>
    <source>
        <strain>SC-B67</strain>
    </source>
</reference>
<accession>Q57HS2</accession>
<name>WECG_SALCH</name>
<feature type="chain" id="PRO_0000208431" description="UDP-N-acetyl-D-mannosaminuronic acid transferase">
    <location>
        <begin position="1"/>
        <end position="246"/>
    </location>
</feature>
<comment type="function">
    <text evidence="1">Catalyzes the synthesis of Und-PP-GlcNAc-ManNAcA (Lipid II), the second lipid-linked intermediate involved in enterobacterial common antigen (ECA) synthesis.</text>
</comment>
<comment type="catalytic activity">
    <reaction evidence="1">
        <text>UDP-N-acetyl-alpha-D-mannosaminouronate + N-acetyl-alpha-D-glucosaminyl-di-trans,octa-cis-undecaprenyl diphosphate = beta-D-ManNAcA-(1-&gt;4)-alpha-D-GlcNAc-di-trans,octa-cis-undecaprenyl diphosphate + UDP + H(+)</text>
        <dbReference type="Rhea" id="RHEA:28366"/>
        <dbReference type="ChEBI" id="CHEBI:15378"/>
        <dbReference type="ChEBI" id="CHEBI:58223"/>
        <dbReference type="ChEBI" id="CHEBI:61495"/>
        <dbReference type="ChEBI" id="CHEBI:62959"/>
        <dbReference type="ChEBI" id="CHEBI:70731"/>
        <dbReference type="EC" id="2.4.1.180"/>
    </reaction>
</comment>
<comment type="pathway">
    <text evidence="1">Bacterial outer membrane biogenesis; enterobacterial common antigen biosynthesis.</text>
</comment>
<comment type="similarity">
    <text evidence="1">Belongs to the glycosyltransferase 26 family.</text>
</comment>
<evidence type="ECO:0000255" key="1">
    <source>
        <dbReference type="HAMAP-Rule" id="MF_01001"/>
    </source>
</evidence>
<dbReference type="EC" id="2.4.1.180" evidence="1"/>
<dbReference type="EMBL" id="AE017220">
    <property type="protein sequence ID" value="AAX67740.1"/>
    <property type="molecule type" value="Genomic_DNA"/>
</dbReference>
<dbReference type="RefSeq" id="WP_000183617.1">
    <property type="nucleotide sequence ID" value="NC_006905.1"/>
</dbReference>
<dbReference type="SMR" id="Q57HS2"/>
<dbReference type="CAZy" id="GT26">
    <property type="family name" value="Glycosyltransferase Family 26"/>
</dbReference>
<dbReference type="KEGG" id="sec:SCH_3834"/>
<dbReference type="HOGENOM" id="CLU_063203_3_2_6"/>
<dbReference type="UniPathway" id="UPA00566"/>
<dbReference type="Proteomes" id="UP000000538">
    <property type="component" value="Chromosome"/>
</dbReference>
<dbReference type="GO" id="GO:0047241">
    <property type="term" value="F:lipopolysaccharide N-acetylmannosaminouronosyltransferase activity"/>
    <property type="evidence" value="ECO:0007669"/>
    <property type="project" value="UniProtKB-UniRule"/>
</dbReference>
<dbReference type="GO" id="GO:0009246">
    <property type="term" value="P:enterobacterial common antigen biosynthetic process"/>
    <property type="evidence" value="ECO:0007669"/>
    <property type="project" value="UniProtKB-UniRule"/>
</dbReference>
<dbReference type="CDD" id="cd06533">
    <property type="entry name" value="Glyco_transf_WecG_TagA"/>
    <property type="match status" value="1"/>
</dbReference>
<dbReference type="HAMAP" id="MF_01001">
    <property type="entry name" value="WecG_RffM"/>
    <property type="match status" value="1"/>
</dbReference>
<dbReference type="InterPro" id="IPR023085">
    <property type="entry name" value="UDP-ManNAcA_Trfase_WecG"/>
</dbReference>
<dbReference type="InterPro" id="IPR004629">
    <property type="entry name" value="WecG_TagA_CpsF"/>
</dbReference>
<dbReference type="NCBIfam" id="NF002980">
    <property type="entry name" value="PRK03692.1"/>
    <property type="match status" value="1"/>
</dbReference>
<dbReference type="NCBIfam" id="TIGR00696">
    <property type="entry name" value="wecG_tagA_cpsF"/>
    <property type="match status" value="1"/>
</dbReference>
<dbReference type="PANTHER" id="PTHR34136">
    <property type="match status" value="1"/>
</dbReference>
<dbReference type="PANTHER" id="PTHR34136:SF1">
    <property type="entry name" value="UDP-N-ACETYL-D-MANNOSAMINURONIC ACID TRANSFERASE"/>
    <property type="match status" value="1"/>
</dbReference>
<dbReference type="Pfam" id="PF03808">
    <property type="entry name" value="Glyco_tran_WecG"/>
    <property type="match status" value="1"/>
</dbReference>